<keyword id="KW-0997">Cell inner membrane</keyword>
<keyword id="KW-1003">Cell membrane</keyword>
<keyword id="KW-0350">Heme biosynthesis</keyword>
<keyword id="KW-0472">Membrane</keyword>
<keyword id="KW-0808">Transferase</keyword>
<keyword id="KW-0812">Transmembrane</keyword>
<keyword id="KW-1133">Transmembrane helix</keyword>
<gene>
    <name evidence="1" type="primary">cyoE2</name>
    <name type="ordered locus">PSEEN0960</name>
</gene>
<evidence type="ECO:0000255" key="1">
    <source>
        <dbReference type="HAMAP-Rule" id="MF_00154"/>
    </source>
</evidence>
<name>CYOE2_PSEE4</name>
<feature type="chain" id="PRO_0000326922" description="Protoheme IX farnesyltransferase 2">
    <location>
        <begin position="1"/>
        <end position="295"/>
    </location>
</feature>
<feature type="transmembrane region" description="Helical" evidence="1">
    <location>
        <begin position="9"/>
        <end position="29"/>
    </location>
</feature>
<feature type="transmembrane region" description="Helical" evidence="1">
    <location>
        <begin position="36"/>
        <end position="56"/>
    </location>
</feature>
<feature type="transmembrane region" description="Helical" evidence="1">
    <location>
        <begin position="83"/>
        <end position="103"/>
    </location>
</feature>
<feature type="transmembrane region" description="Helical" evidence="1">
    <location>
        <begin position="108"/>
        <end position="128"/>
    </location>
</feature>
<feature type="transmembrane region" description="Helical" evidence="1">
    <location>
        <begin position="135"/>
        <end position="155"/>
    </location>
</feature>
<feature type="transmembrane region" description="Helical" evidence="1">
    <location>
        <begin position="163"/>
        <end position="183"/>
    </location>
</feature>
<feature type="transmembrane region" description="Helical" evidence="1">
    <location>
        <begin position="209"/>
        <end position="229"/>
    </location>
</feature>
<feature type="transmembrane region" description="Helical" evidence="1">
    <location>
        <begin position="230"/>
        <end position="250"/>
    </location>
</feature>
<feature type="transmembrane region" description="Helical" evidence="1">
    <location>
        <begin position="264"/>
        <end position="284"/>
    </location>
</feature>
<dbReference type="EC" id="2.5.1.141" evidence="1"/>
<dbReference type="EMBL" id="CT573326">
    <property type="protein sequence ID" value="CAK13865.1"/>
    <property type="molecule type" value="Genomic_DNA"/>
</dbReference>
<dbReference type="RefSeq" id="WP_011532291.1">
    <property type="nucleotide sequence ID" value="NC_008027.1"/>
</dbReference>
<dbReference type="SMR" id="Q1IEP0"/>
<dbReference type="STRING" id="384676.PSEEN0960"/>
<dbReference type="GeneID" id="32804258"/>
<dbReference type="KEGG" id="pen:PSEEN0960"/>
<dbReference type="eggNOG" id="COG0109">
    <property type="taxonomic scope" value="Bacteria"/>
</dbReference>
<dbReference type="HOGENOM" id="CLU_029631_0_0_6"/>
<dbReference type="OrthoDB" id="9814417at2"/>
<dbReference type="UniPathway" id="UPA00834">
    <property type="reaction ID" value="UER00712"/>
</dbReference>
<dbReference type="Proteomes" id="UP000000658">
    <property type="component" value="Chromosome"/>
</dbReference>
<dbReference type="GO" id="GO:0005886">
    <property type="term" value="C:plasma membrane"/>
    <property type="evidence" value="ECO:0007669"/>
    <property type="project" value="UniProtKB-SubCell"/>
</dbReference>
<dbReference type="GO" id="GO:0008495">
    <property type="term" value="F:protoheme IX farnesyltransferase activity"/>
    <property type="evidence" value="ECO:0007669"/>
    <property type="project" value="UniProtKB-UniRule"/>
</dbReference>
<dbReference type="GO" id="GO:0048034">
    <property type="term" value="P:heme O biosynthetic process"/>
    <property type="evidence" value="ECO:0007669"/>
    <property type="project" value="UniProtKB-UniRule"/>
</dbReference>
<dbReference type="CDD" id="cd13957">
    <property type="entry name" value="PT_UbiA_Cox10"/>
    <property type="match status" value="1"/>
</dbReference>
<dbReference type="FunFam" id="1.10.357.140:FF:000001">
    <property type="entry name" value="Protoheme IX farnesyltransferase"/>
    <property type="match status" value="1"/>
</dbReference>
<dbReference type="Gene3D" id="1.10.357.140">
    <property type="entry name" value="UbiA prenyltransferase"/>
    <property type="match status" value="1"/>
</dbReference>
<dbReference type="HAMAP" id="MF_00154">
    <property type="entry name" value="CyoE_CtaB"/>
    <property type="match status" value="1"/>
</dbReference>
<dbReference type="InterPro" id="IPR006369">
    <property type="entry name" value="Protohaem_IX_farnesylTrfase"/>
</dbReference>
<dbReference type="InterPro" id="IPR000537">
    <property type="entry name" value="UbiA_prenyltransferase"/>
</dbReference>
<dbReference type="InterPro" id="IPR030470">
    <property type="entry name" value="UbiA_prenylTrfase_CS"/>
</dbReference>
<dbReference type="InterPro" id="IPR044878">
    <property type="entry name" value="UbiA_sf"/>
</dbReference>
<dbReference type="NCBIfam" id="TIGR01473">
    <property type="entry name" value="cyoE_ctaB"/>
    <property type="match status" value="1"/>
</dbReference>
<dbReference type="NCBIfam" id="NF003348">
    <property type="entry name" value="PRK04375.1-1"/>
    <property type="match status" value="1"/>
</dbReference>
<dbReference type="PANTHER" id="PTHR43448">
    <property type="entry name" value="PROTOHEME IX FARNESYLTRANSFERASE, MITOCHONDRIAL"/>
    <property type="match status" value="1"/>
</dbReference>
<dbReference type="PANTHER" id="PTHR43448:SF2">
    <property type="entry name" value="PROTOHEME IX FARNESYLTRANSFERASE, MITOCHONDRIAL"/>
    <property type="match status" value="1"/>
</dbReference>
<dbReference type="Pfam" id="PF01040">
    <property type="entry name" value="UbiA"/>
    <property type="match status" value="1"/>
</dbReference>
<dbReference type="PROSITE" id="PS00943">
    <property type="entry name" value="UBIA"/>
    <property type="match status" value="1"/>
</dbReference>
<protein>
    <recommendedName>
        <fullName evidence="1">Protoheme IX farnesyltransferase 2</fullName>
        <ecNumber evidence="1">2.5.1.141</ecNumber>
    </recommendedName>
    <alternativeName>
        <fullName evidence="1">Heme B farnesyltransferase 2</fullName>
    </alternativeName>
    <alternativeName>
        <fullName evidence="1">Heme O synthase 2</fullName>
    </alternativeName>
</protein>
<comment type="function">
    <text evidence="1">Converts heme B (protoheme IX) to heme O by substitution of the vinyl group on carbon 2 of heme B porphyrin ring with a hydroxyethyl farnesyl side group.</text>
</comment>
<comment type="catalytic activity">
    <reaction evidence="1">
        <text>heme b + (2E,6E)-farnesyl diphosphate + H2O = Fe(II)-heme o + diphosphate</text>
        <dbReference type="Rhea" id="RHEA:28070"/>
        <dbReference type="ChEBI" id="CHEBI:15377"/>
        <dbReference type="ChEBI" id="CHEBI:33019"/>
        <dbReference type="ChEBI" id="CHEBI:60344"/>
        <dbReference type="ChEBI" id="CHEBI:60530"/>
        <dbReference type="ChEBI" id="CHEBI:175763"/>
        <dbReference type="EC" id="2.5.1.141"/>
    </reaction>
</comment>
<comment type="pathway">
    <text evidence="1">Porphyrin-containing compound metabolism; heme O biosynthesis; heme O from protoheme: step 1/1.</text>
</comment>
<comment type="subcellular location">
    <subcellularLocation>
        <location evidence="1">Cell inner membrane</location>
        <topology evidence="1">Multi-pass membrane protein</topology>
    </subcellularLocation>
</comment>
<comment type="miscellaneous">
    <text evidence="1">Carbon 2 of the heme B porphyrin ring is defined according to the Fischer nomenclature.</text>
</comment>
<comment type="similarity">
    <text evidence="1">Belongs to the UbiA prenyltransferase family. Protoheme IX farnesyltransferase subfamily.</text>
</comment>
<proteinExistence type="inferred from homology"/>
<accession>Q1IEP0</accession>
<organism>
    <name type="scientific">Pseudomonas entomophila (strain L48)</name>
    <dbReference type="NCBI Taxonomy" id="384676"/>
    <lineage>
        <taxon>Bacteria</taxon>
        <taxon>Pseudomonadati</taxon>
        <taxon>Pseudomonadota</taxon>
        <taxon>Gammaproteobacteria</taxon>
        <taxon>Pseudomonadales</taxon>
        <taxon>Pseudomonadaceae</taxon>
        <taxon>Pseudomonas</taxon>
    </lineage>
</organism>
<reference key="1">
    <citation type="journal article" date="2006" name="Nat. Biotechnol.">
        <title>Complete genome sequence of the entomopathogenic and metabolically versatile soil bacterium Pseudomonas entomophila.</title>
        <authorList>
            <person name="Vodovar N."/>
            <person name="Vallenet D."/>
            <person name="Cruveiller S."/>
            <person name="Rouy Z."/>
            <person name="Barbe V."/>
            <person name="Acosta C."/>
            <person name="Cattolico L."/>
            <person name="Jubin C."/>
            <person name="Lajus A."/>
            <person name="Segurens B."/>
            <person name="Vacherie B."/>
            <person name="Wincker P."/>
            <person name="Weissenbach J."/>
            <person name="Lemaitre B."/>
            <person name="Medigue C."/>
            <person name="Boccard F."/>
        </authorList>
    </citation>
    <scope>NUCLEOTIDE SEQUENCE [LARGE SCALE GENOMIC DNA]</scope>
    <source>
        <strain>L48</strain>
    </source>
</reference>
<sequence length="295" mass="31698">MSVKHFIQITKPGIIFGNVLSVAGGFFLASKGHVDFALFLAVVIGTSLVVASGCVFNNCIDRDIDHKMERTKNRVMVQGGMSLTLALAYATLLGVAGFSLLYVQANPLAAFCALVGFVVYVGFYSLWLKRKSVHGTLVGSLSGAMPPVIGYCAVSNSFDLAAVTLLVMFSLWQMPHSFAIAIFRFKDYSAANIPVLPVARGILAAKKQIVLYVLAFVLATVMLTLGGYAGLGYLAVAAAMGLYWLYMAWGGYKAEDDSKWARKVFGFSILTVTALSVMMSVDSQTAADVLMTYAR</sequence>